<evidence type="ECO:0000250" key="1"/>
<evidence type="ECO:0000255" key="2"/>
<evidence type="ECO:0000305" key="3"/>
<feature type="signal peptide" evidence="2">
    <location>
        <begin position="1"/>
        <end position="22"/>
    </location>
</feature>
<feature type="propeptide" id="PRO_0000315486" evidence="3">
    <location>
        <begin position="23"/>
        <end position="50"/>
    </location>
</feature>
<feature type="peptide" id="PRO_0000315487" description="Conotoxin LiCr95">
    <location>
        <begin position="51"/>
        <end position="83"/>
    </location>
</feature>
<feature type="disulfide bond" evidence="1">
    <location>
        <begin position="52"/>
        <end position="67"/>
    </location>
</feature>
<feature type="disulfide bond" evidence="1">
    <location>
        <begin position="59"/>
        <end position="71"/>
    </location>
</feature>
<feature type="disulfide bond" evidence="1">
    <location>
        <begin position="66"/>
        <end position="80"/>
    </location>
</feature>
<sequence>MKLTCALIVAMLFLTACQLTTTDDSRGRQKYPTERLRVKMRNPKLSKLTKTCDPPGDSCSRWYNHCCSKLCTSRNSGPTCSRP</sequence>
<comment type="subcellular location">
    <subcellularLocation>
        <location evidence="1">Secreted</location>
    </subcellularLocation>
</comment>
<comment type="tissue specificity">
    <text>Expressed by the venom duct.</text>
</comment>
<comment type="domain">
    <text evidence="1">The presence of a 'disulfide through disulfide knot' structurally defines this protein as a knottin.</text>
</comment>
<comment type="domain">
    <text>The cysteine framework is VI/VII (C-C-CC-C-C).</text>
</comment>
<comment type="similarity">
    <text evidence="3">Belongs to the conotoxin O1 superfamily.</text>
</comment>
<proteinExistence type="evidence at transcript level"/>
<protein>
    <recommendedName>
        <fullName>Conotoxin LiCr95</fullName>
    </recommendedName>
</protein>
<dbReference type="EMBL" id="DQ141167">
    <property type="protein sequence ID" value="AAZ83766.1"/>
    <property type="molecule type" value="mRNA"/>
</dbReference>
<dbReference type="ConoServer" id="1121">
    <property type="toxin name" value="LiCr95 precursor"/>
</dbReference>
<dbReference type="GO" id="GO:0005576">
    <property type="term" value="C:extracellular region"/>
    <property type="evidence" value="ECO:0007669"/>
    <property type="project" value="UniProtKB-SubCell"/>
</dbReference>
<dbReference type="GO" id="GO:0008200">
    <property type="term" value="F:ion channel inhibitor activity"/>
    <property type="evidence" value="ECO:0007669"/>
    <property type="project" value="InterPro"/>
</dbReference>
<dbReference type="GO" id="GO:0090729">
    <property type="term" value="F:toxin activity"/>
    <property type="evidence" value="ECO:0007669"/>
    <property type="project" value="UniProtKB-KW"/>
</dbReference>
<dbReference type="InterPro" id="IPR004214">
    <property type="entry name" value="Conotoxin"/>
</dbReference>
<dbReference type="Pfam" id="PF02950">
    <property type="entry name" value="Conotoxin"/>
    <property type="match status" value="1"/>
</dbReference>
<keyword id="KW-1015">Disulfide bond</keyword>
<keyword id="KW-0960">Knottin</keyword>
<keyword id="KW-0528">Neurotoxin</keyword>
<keyword id="KW-0964">Secreted</keyword>
<keyword id="KW-0732">Signal</keyword>
<keyword id="KW-0800">Toxin</keyword>
<name>O165_CONLI</name>
<accession>Q3YEE6</accession>
<reference key="1">
    <citation type="journal article" date="2006" name="Chem. Biol. Drug Des.">
        <title>Novel O-superfamily conotoxins identified by cDNA cloning from three vermivorous Conus species.</title>
        <authorList>
            <person name="Zhangsun D."/>
            <person name="Luo S."/>
            <person name="Wu Y."/>
            <person name="Zhu X."/>
            <person name="Hu Y."/>
            <person name="Xie L."/>
        </authorList>
    </citation>
    <scope>NUCLEOTIDE SEQUENCE [MRNA]</scope>
    <source>
        <tissue>Venom duct</tissue>
    </source>
</reference>
<organism>
    <name type="scientific">Conus lividus</name>
    <name type="common">Livid cone</name>
    <dbReference type="NCBI Taxonomy" id="89426"/>
    <lineage>
        <taxon>Eukaryota</taxon>
        <taxon>Metazoa</taxon>
        <taxon>Spiralia</taxon>
        <taxon>Lophotrochozoa</taxon>
        <taxon>Mollusca</taxon>
        <taxon>Gastropoda</taxon>
        <taxon>Caenogastropoda</taxon>
        <taxon>Neogastropoda</taxon>
        <taxon>Conoidea</taxon>
        <taxon>Conidae</taxon>
        <taxon>Conus</taxon>
        <taxon>Lividoconus</taxon>
    </lineage>
</organism>